<organism>
    <name type="scientific">Limosilactobacillus reuteri (strain DSM 20016)</name>
    <name type="common">Lactobacillus reuteri</name>
    <dbReference type="NCBI Taxonomy" id="557436"/>
    <lineage>
        <taxon>Bacteria</taxon>
        <taxon>Bacillati</taxon>
        <taxon>Bacillota</taxon>
        <taxon>Bacilli</taxon>
        <taxon>Lactobacillales</taxon>
        <taxon>Lactobacillaceae</taxon>
        <taxon>Limosilactobacillus</taxon>
    </lineage>
</organism>
<proteinExistence type="inferred from homology"/>
<comment type="function">
    <text evidence="1">Catalyzes the GTP-dependent ribosomal translocation step during translation elongation. During this step, the ribosome changes from the pre-translocational (PRE) to the post-translocational (POST) state as the newly formed A-site-bound peptidyl-tRNA and P-site-bound deacylated tRNA move to the P and E sites, respectively. Catalyzes the coordinated movement of the two tRNA molecules, the mRNA and conformational changes in the ribosome.</text>
</comment>
<comment type="subcellular location">
    <subcellularLocation>
        <location evidence="1">Cytoplasm</location>
    </subcellularLocation>
</comment>
<comment type="similarity">
    <text evidence="1">Belongs to the TRAFAC class translation factor GTPase superfamily. Classic translation factor GTPase family. EF-G/EF-2 subfamily.</text>
</comment>
<feature type="chain" id="PRO_1000057390" description="Elongation factor G">
    <location>
        <begin position="1"/>
        <end position="695"/>
    </location>
</feature>
<feature type="domain" description="tr-type G">
    <location>
        <begin position="10"/>
        <end position="285"/>
    </location>
</feature>
<feature type="binding site" evidence="1">
    <location>
        <begin position="19"/>
        <end position="26"/>
    </location>
    <ligand>
        <name>GTP</name>
        <dbReference type="ChEBI" id="CHEBI:37565"/>
    </ligand>
</feature>
<feature type="binding site" evidence="1">
    <location>
        <begin position="83"/>
        <end position="87"/>
    </location>
    <ligand>
        <name>GTP</name>
        <dbReference type="ChEBI" id="CHEBI:37565"/>
    </ligand>
</feature>
<feature type="binding site" evidence="1">
    <location>
        <begin position="137"/>
        <end position="140"/>
    </location>
    <ligand>
        <name>GTP</name>
        <dbReference type="ChEBI" id="CHEBI:37565"/>
    </ligand>
</feature>
<gene>
    <name evidence="1" type="primary">fusA</name>
    <name type="ordered locus">Lreu_1486</name>
</gene>
<sequence>MANKREYPLAKTRNIGIMAHIDAGKTTATERILYYTGKIHKIGETHDGASQMDWMDEEKERGITITSAATTAVWKDNRINIIDTPGHVDFTVEVERALRVLDGAVTVLDAQAGVEPQTETVWRQADQFNVPRIVFANKMDKIGANFDYSVQTIKDRLNVTPLPIQMPIGAEDDFIGLVDLVKMVAYVYDEDKLGTNWDTVEIPDDMKEEAQKRHDEMVETLADIDDNLMEKYLEGEEISVDEIKAAIRKGTLEEQIFPVLAGSAYKDKGIQMMLDAVIDYLPSPIDVKPFVAHDADGNEIELTAGDDKPFAALAFKIATDPFVGRLTFLRVYTGSLQSGSYVLNATKDKRERIGRLLQMHSNQQQEIPEVFSGDIAAAIGLKNTTTGDSLTDPDHPLQLESMDFPEPVIQVSVEPKSKADQDKMDKGLQKLAEEDPTFKAETNPETGETLIAGMGELHLDIIVERLRREFHAEVTVGKPQVSYREAFTKTASAQGKFVRQSGGKGQYGDVWIEFTPLKEGEGFEFEDAIVGGVVPREFIPAVEQGLKEAMQNGVLAGYPLVDMHAKLYDGSYHEVDSSEAAFKVAASLALKNAAKKADPVILEPIMKVDIVVPQDNMGDVMGQVTARRGTIDGMEERGNAQLIHSFVPLSEMFGYATALRSATQGRGTFTMTFDHYSAVPKSVQEDIIKKNGGNN</sequence>
<protein>
    <recommendedName>
        <fullName evidence="1">Elongation factor G</fullName>
        <shortName evidence="1">EF-G</shortName>
    </recommendedName>
</protein>
<dbReference type="EMBL" id="CP000705">
    <property type="protein sequence ID" value="ABQ83732.1"/>
    <property type="molecule type" value="Genomic_DNA"/>
</dbReference>
<dbReference type="RefSeq" id="WP_003664573.1">
    <property type="nucleotide sequence ID" value="NZ_AZDD01000010.1"/>
</dbReference>
<dbReference type="SMR" id="A5VLK8"/>
<dbReference type="STRING" id="557436.Lreu_1486"/>
<dbReference type="KEGG" id="lre:Lreu_1486"/>
<dbReference type="PATRIC" id="fig|557436.17.peg.137"/>
<dbReference type="eggNOG" id="COG0480">
    <property type="taxonomic scope" value="Bacteria"/>
</dbReference>
<dbReference type="HOGENOM" id="CLU_002794_4_1_9"/>
<dbReference type="Proteomes" id="UP000001991">
    <property type="component" value="Chromosome"/>
</dbReference>
<dbReference type="GO" id="GO:0005737">
    <property type="term" value="C:cytoplasm"/>
    <property type="evidence" value="ECO:0007669"/>
    <property type="project" value="UniProtKB-SubCell"/>
</dbReference>
<dbReference type="GO" id="GO:0005525">
    <property type="term" value="F:GTP binding"/>
    <property type="evidence" value="ECO:0007669"/>
    <property type="project" value="UniProtKB-UniRule"/>
</dbReference>
<dbReference type="GO" id="GO:0003924">
    <property type="term" value="F:GTPase activity"/>
    <property type="evidence" value="ECO:0007669"/>
    <property type="project" value="InterPro"/>
</dbReference>
<dbReference type="GO" id="GO:0003746">
    <property type="term" value="F:translation elongation factor activity"/>
    <property type="evidence" value="ECO:0007669"/>
    <property type="project" value="UniProtKB-UniRule"/>
</dbReference>
<dbReference type="GO" id="GO:0032790">
    <property type="term" value="P:ribosome disassembly"/>
    <property type="evidence" value="ECO:0007669"/>
    <property type="project" value="TreeGrafter"/>
</dbReference>
<dbReference type="CDD" id="cd01886">
    <property type="entry name" value="EF-G"/>
    <property type="match status" value="1"/>
</dbReference>
<dbReference type="CDD" id="cd16262">
    <property type="entry name" value="EFG_III"/>
    <property type="match status" value="1"/>
</dbReference>
<dbReference type="CDD" id="cd01434">
    <property type="entry name" value="EFG_mtEFG1_IV"/>
    <property type="match status" value="1"/>
</dbReference>
<dbReference type="CDD" id="cd03713">
    <property type="entry name" value="EFG_mtEFG_C"/>
    <property type="match status" value="1"/>
</dbReference>
<dbReference type="CDD" id="cd04088">
    <property type="entry name" value="EFG_mtEFG_II"/>
    <property type="match status" value="1"/>
</dbReference>
<dbReference type="FunFam" id="2.40.30.10:FF:000006">
    <property type="entry name" value="Elongation factor G"/>
    <property type="match status" value="1"/>
</dbReference>
<dbReference type="FunFam" id="3.30.230.10:FF:000003">
    <property type="entry name" value="Elongation factor G"/>
    <property type="match status" value="1"/>
</dbReference>
<dbReference type="FunFam" id="3.30.70.240:FF:000001">
    <property type="entry name" value="Elongation factor G"/>
    <property type="match status" value="1"/>
</dbReference>
<dbReference type="FunFam" id="3.30.70.870:FF:000001">
    <property type="entry name" value="Elongation factor G"/>
    <property type="match status" value="1"/>
</dbReference>
<dbReference type="FunFam" id="3.40.50.300:FF:000029">
    <property type="entry name" value="Elongation factor G"/>
    <property type="match status" value="1"/>
</dbReference>
<dbReference type="Gene3D" id="3.30.230.10">
    <property type="match status" value="1"/>
</dbReference>
<dbReference type="Gene3D" id="3.30.70.240">
    <property type="match status" value="1"/>
</dbReference>
<dbReference type="Gene3D" id="3.30.70.870">
    <property type="entry name" value="Elongation Factor G (Translational Gtpase), domain 3"/>
    <property type="match status" value="1"/>
</dbReference>
<dbReference type="Gene3D" id="3.40.50.300">
    <property type="entry name" value="P-loop containing nucleotide triphosphate hydrolases"/>
    <property type="match status" value="1"/>
</dbReference>
<dbReference type="Gene3D" id="2.40.30.10">
    <property type="entry name" value="Translation factors"/>
    <property type="match status" value="1"/>
</dbReference>
<dbReference type="HAMAP" id="MF_00054_B">
    <property type="entry name" value="EF_G_EF_2_B"/>
    <property type="match status" value="1"/>
</dbReference>
<dbReference type="InterPro" id="IPR053905">
    <property type="entry name" value="EF-G-like_DII"/>
</dbReference>
<dbReference type="InterPro" id="IPR041095">
    <property type="entry name" value="EFG_II"/>
</dbReference>
<dbReference type="InterPro" id="IPR009022">
    <property type="entry name" value="EFG_III"/>
</dbReference>
<dbReference type="InterPro" id="IPR035647">
    <property type="entry name" value="EFG_III/V"/>
</dbReference>
<dbReference type="InterPro" id="IPR047872">
    <property type="entry name" value="EFG_IV"/>
</dbReference>
<dbReference type="InterPro" id="IPR035649">
    <property type="entry name" value="EFG_V"/>
</dbReference>
<dbReference type="InterPro" id="IPR000640">
    <property type="entry name" value="EFG_V-like"/>
</dbReference>
<dbReference type="InterPro" id="IPR031157">
    <property type="entry name" value="G_TR_CS"/>
</dbReference>
<dbReference type="InterPro" id="IPR027417">
    <property type="entry name" value="P-loop_NTPase"/>
</dbReference>
<dbReference type="InterPro" id="IPR020568">
    <property type="entry name" value="Ribosomal_Su5_D2-typ_SF"/>
</dbReference>
<dbReference type="InterPro" id="IPR014721">
    <property type="entry name" value="Ribsml_uS5_D2-typ_fold_subgr"/>
</dbReference>
<dbReference type="InterPro" id="IPR005225">
    <property type="entry name" value="Small_GTP-bd"/>
</dbReference>
<dbReference type="InterPro" id="IPR000795">
    <property type="entry name" value="T_Tr_GTP-bd_dom"/>
</dbReference>
<dbReference type="InterPro" id="IPR009000">
    <property type="entry name" value="Transl_B-barrel_sf"/>
</dbReference>
<dbReference type="InterPro" id="IPR004540">
    <property type="entry name" value="Transl_elong_EFG/EF2"/>
</dbReference>
<dbReference type="InterPro" id="IPR005517">
    <property type="entry name" value="Transl_elong_EFG/EF2_IV"/>
</dbReference>
<dbReference type="NCBIfam" id="TIGR00484">
    <property type="entry name" value="EF-G"/>
    <property type="match status" value="1"/>
</dbReference>
<dbReference type="NCBIfam" id="NF009379">
    <property type="entry name" value="PRK12740.1-3"/>
    <property type="match status" value="1"/>
</dbReference>
<dbReference type="NCBIfam" id="NF009381">
    <property type="entry name" value="PRK12740.1-5"/>
    <property type="match status" value="1"/>
</dbReference>
<dbReference type="NCBIfam" id="NF009891">
    <property type="entry name" value="PRK13351.1-1"/>
    <property type="match status" value="1"/>
</dbReference>
<dbReference type="NCBIfam" id="TIGR00231">
    <property type="entry name" value="small_GTP"/>
    <property type="match status" value="1"/>
</dbReference>
<dbReference type="PANTHER" id="PTHR43261:SF1">
    <property type="entry name" value="RIBOSOME-RELEASING FACTOR 2, MITOCHONDRIAL"/>
    <property type="match status" value="1"/>
</dbReference>
<dbReference type="PANTHER" id="PTHR43261">
    <property type="entry name" value="TRANSLATION ELONGATION FACTOR G-RELATED"/>
    <property type="match status" value="1"/>
</dbReference>
<dbReference type="Pfam" id="PF22042">
    <property type="entry name" value="EF-G_D2"/>
    <property type="match status" value="1"/>
</dbReference>
<dbReference type="Pfam" id="PF00679">
    <property type="entry name" value="EFG_C"/>
    <property type="match status" value="1"/>
</dbReference>
<dbReference type="Pfam" id="PF14492">
    <property type="entry name" value="EFG_III"/>
    <property type="match status" value="1"/>
</dbReference>
<dbReference type="Pfam" id="PF03764">
    <property type="entry name" value="EFG_IV"/>
    <property type="match status" value="1"/>
</dbReference>
<dbReference type="Pfam" id="PF00009">
    <property type="entry name" value="GTP_EFTU"/>
    <property type="match status" value="1"/>
</dbReference>
<dbReference type="PRINTS" id="PR00315">
    <property type="entry name" value="ELONGATNFCT"/>
</dbReference>
<dbReference type="SMART" id="SM00838">
    <property type="entry name" value="EFG_C"/>
    <property type="match status" value="1"/>
</dbReference>
<dbReference type="SMART" id="SM00889">
    <property type="entry name" value="EFG_IV"/>
    <property type="match status" value="1"/>
</dbReference>
<dbReference type="SUPFAM" id="SSF54980">
    <property type="entry name" value="EF-G C-terminal domain-like"/>
    <property type="match status" value="2"/>
</dbReference>
<dbReference type="SUPFAM" id="SSF52540">
    <property type="entry name" value="P-loop containing nucleoside triphosphate hydrolases"/>
    <property type="match status" value="1"/>
</dbReference>
<dbReference type="SUPFAM" id="SSF54211">
    <property type="entry name" value="Ribosomal protein S5 domain 2-like"/>
    <property type="match status" value="1"/>
</dbReference>
<dbReference type="SUPFAM" id="SSF50447">
    <property type="entry name" value="Translation proteins"/>
    <property type="match status" value="1"/>
</dbReference>
<dbReference type="PROSITE" id="PS00301">
    <property type="entry name" value="G_TR_1"/>
    <property type="match status" value="1"/>
</dbReference>
<dbReference type="PROSITE" id="PS51722">
    <property type="entry name" value="G_TR_2"/>
    <property type="match status" value="1"/>
</dbReference>
<name>EFG_LIMRD</name>
<keyword id="KW-0963">Cytoplasm</keyword>
<keyword id="KW-0251">Elongation factor</keyword>
<keyword id="KW-0342">GTP-binding</keyword>
<keyword id="KW-0547">Nucleotide-binding</keyword>
<keyword id="KW-0648">Protein biosynthesis</keyword>
<keyword id="KW-1185">Reference proteome</keyword>
<accession>A5VLK8</accession>
<evidence type="ECO:0000255" key="1">
    <source>
        <dbReference type="HAMAP-Rule" id="MF_00054"/>
    </source>
</evidence>
<reference key="1">
    <citation type="journal article" date="2011" name="PLoS Genet.">
        <title>The evolution of host specialization in the vertebrate gut symbiont Lactobacillus reuteri.</title>
        <authorList>
            <person name="Frese S.A."/>
            <person name="Benson A.K."/>
            <person name="Tannock G.W."/>
            <person name="Loach D.M."/>
            <person name="Kim J."/>
            <person name="Zhang M."/>
            <person name="Oh P.L."/>
            <person name="Heng N.C."/>
            <person name="Patil P.B."/>
            <person name="Juge N."/>
            <person name="Mackenzie D.A."/>
            <person name="Pearson B.M."/>
            <person name="Lapidus A."/>
            <person name="Dalin E."/>
            <person name="Tice H."/>
            <person name="Goltsman E."/>
            <person name="Land M."/>
            <person name="Hauser L."/>
            <person name="Ivanova N."/>
            <person name="Kyrpides N.C."/>
            <person name="Walter J."/>
        </authorList>
    </citation>
    <scope>NUCLEOTIDE SEQUENCE [LARGE SCALE GENOMIC DNA]</scope>
    <source>
        <strain>DSM 20016</strain>
    </source>
</reference>